<keyword id="KW-0001">2Fe-2S</keyword>
<keyword id="KW-0004">4Fe-4S</keyword>
<keyword id="KW-0093">Biotin biosynthesis</keyword>
<keyword id="KW-0408">Iron</keyword>
<keyword id="KW-0411">Iron-sulfur</keyword>
<keyword id="KW-0479">Metal-binding</keyword>
<keyword id="KW-1185">Reference proteome</keyword>
<keyword id="KW-0949">S-adenosyl-L-methionine</keyword>
<keyword id="KW-0808">Transferase</keyword>
<protein>
    <recommendedName>
        <fullName evidence="1">Biotin synthase</fullName>
        <ecNumber evidence="1">2.8.1.6</ecNumber>
    </recommendedName>
</protein>
<dbReference type="EC" id="2.8.1.6" evidence="1"/>
<dbReference type="EMBL" id="AE016825">
    <property type="protein sequence ID" value="AAQ62040.1"/>
    <property type="molecule type" value="Genomic_DNA"/>
</dbReference>
<dbReference type="RefSeq" id="WP_011137927.1">
    <property type="nucleotide sequence ID" value="NC_005085.1"/>
</dbReference>
<dbReference type="SMR" id="Q7NPW1"/>
<dbReference type="STRING" id="243365.CV_4381"/>
<dbReference type="KEGG" id="cvi:CV_4381"/>
<dbReference type="eggNOG" id="COG0502">
    <property type="taxonomic scope" value="Bacteria"/>
</dbReference>
<dbReference type="HOGENOM" id="CLU_033172_1_2_4"/>
<dbReference type="OrthoDB" id="9786826at2"/>
<dbReference type="UniPathway" id="UPA00078">
    <property type="reaction ID" value="UER00162"/>
</dbReference>
<dbReference type="Proteomes" id="UP000001424">
    <property type="component" value="Chromosome"/>
</dbReference>
<dbReference type="GO" id="GO:0051537">
    <property type="term" value="F:2 iron, 2 sulfur cluster binding"/>
    <property type="evidence" value="ECO:0007669"/>
    <property type="project" value="UniProtKB-KW"/>
</dbReference>
<dbReference type="GO" id="GO:0051539">
    <property type="term" value="F:4 iron, 4 sulfur cluster binding"/>
    <property type="evidence" value="ECO:0007669"/>
    <property type="project" value="UniProtKB-KW"/>
</dbReference>
<dbReference type="GO" id="GO:0004076">
    <property type="term" value="F:biotin synthase activity"/>
    <property type="evidence" value="ECO:0007669"/>
    <property type="project" value="UniProtKB-UniRule"/>
</dbReference>
<dbReference type="GO" id="GO:0005506">
    <property type="term" value="F:iron ion binding"/>
    <property type="evidence" value="ECO:0007669"/>
    <property type="project" value="UniProtKB-UniRule"/>
</dbReference>
<dbReference type="GO" id="GO:0009102">
    <property type="term" value="P:biotin biosynthetic process"/>
    <property type="evidence" value="ECO:0007669"/>
    <property type="project" value="UniProtKB-UniRule"/>
</dbReference>
<dbReference type="CDD" id="cd01335">
    <property type="entry name" value="Radical_SAM"/>
    <property type="match status" value="1"/>
</dbReference>
<dbReference type="FunFam" id="3.20.20.70:FF:000011">
    <property type="entry name" value="Biotin synthase"/>
    <property type="match status" value="1"/>
</dbReference>
<dbReference type="Gene3D" id="3.20.20.70">
    <property type="entry name" value="Aldolase class I"/>
    <property type="match status" value="1"/>
</dbReference>
<dbReference type="HAMAP" id="MF_01694">
    <property type="entry name" value="BioB"/>
    <property type="match status" value="1"/>
</dbReference>
<dbReference type="InterPro" id="IPR013785">
    <property type="entry name" value="Aldolase_TIM"/>
</dbReference>
<dbReference type="InterPro" id="IPR010722">
    <property type="entry name" value="BATS_dom"/>
</dbReference>
<dbReference type="InterPro" id="IPR002684">
    <property type="entry name" value="Biotin_synth/BioAB"/>
</dbReference>
<dbReference type="InterPro" id="IPR024177">
    <property type="entry name" value="Biotin_synthase"/>
</dbReference>
<dbReference type="InterPro" id="IPR006638">
    <property type="entry name" value="Elp3/MiaA/NifB-like_rSAM"/>
</dbReference>
<dbReference type="InterPro" id="IPR007197">
    <property type="entry name" value="rSAM"/>
</dbReference>
<dbReference type="NCBIfam" id="TIGR00433">
    <property type="entry name" value="bioB"/>
    <property type="match status" value="1"/>
</dbReference>
<dbReference type="PANTHER" id="PTHR22976">
    <property type="entry name" value="BIOTIN SYNTHASE"/>
    <property type="match status" value="1"/>
</dbReference>
<dbReference type="PANTHER" id="PTHR22976:SF2">
    <property type="entry name" value="BIOTIN SYNTHASE, MITOCHONDRIAL"/>
    <property type="match status" value="1"/>
</dbReference>
<dbReference type="Pfam" id="PF06968">
    <property type="entry name" value="BATS"/>
    <property type="match status" value="1"/>
</dbReference>
<dbReference type="Pfam" id="PF04055">
    <property type="entry name" value="Radical_SAM"/>
    <property type="match status" value="1"/>
</dbReference>
<dbReference type="PIRSF" id="PIRSF001619">
    <property type="entry name" value="Biotin_synth"/>
    <property type="match status" value="1"/>
</dbReference>
<dbReference type="SFLD" id="SFLDG01060">
    <property type="entry name" value="BATS_domain_containing"/>
    <property type="match status" value="1"/>
</dbReference>
<dbReference type="SFLD" id="SFLDF00272">
    <property type="entry name" value="biotin_synthase"/>
    <property type="match status" value="1"/>
</dbReference>
<dbReference type="SMART" id="SM00876">
    <property type="entry name" value="BATS"/>
    <property type="match status" value="1"/>
</dbReference>
<dbReference type="SMART" id="SM00729">
    <property type="entry name" value="Elp3"/>
    <property type="match status" value="1"/>
</dbReference>
<dbReference type="SUPFAM" id="SSF102114">
    <property type="entry name" value="Radical SAM enzymes"/>
    <property type="match status" value="1"/>
</dbReference>
<dbReference type="PROSITE" id="PS51918">
    <property type="entry name" value="RADICAL_SAM"/>
    <property type="match status" value="1"/>
</dbReference>
<comment type="function">
    <text evidence="1">Catalyzes the conversion of dethiobiotin (DTB) to biotin by the insertion of a sulfur atom into dethiobiotin via a radical-based mechanism.</text>
</comment>
<comment type="catalytic activity">
    <reaction evidence="1">
        <text>(4R,5S)-dethiobiotin + (sulfur carrier)-SH + 2 reduced [2Fe-2S]-[ferredoxin] + 2 S-adenosyl-L-methionine = (sulfur carrier)-H + biotin + 2 5'-deoxyadenosine + 2 L-methionine + 2 oxidized [2Fe-2S]-[ferredoxin]</text>
        <dbReference type="Rhea" id="RHEA:22060"/>
        <dbReference type="Rhea" id="RHEA-COMP:10000"/>
        <dbReference type="Rhea" id="RHEA-COMP:10001"/>
        <dbReference type="Rhea" id="RHEA-COMP:14737"/>
        <dbReference type="Rhea" id="RHEA-COMP:14739"/>
        <dbReference type="ChEBI" id="CHEBI:17319"/>
        <dbReference type="ChEBI" id="CHEBI:29917"/>
        <dbReference type="ChEBI" id="CHEBI:33737"/>
        <dbReference type="ChEBI" id="CHEBI:33738"/>
        <dbReference type="ChEBI" id="CHEBI:57586"/>
        <dbReference type="ChEBI" id="CHEBI:57844"/>
        <dbReference type="ChEBI" id="CHEBI:59789"/>
        <dbReference type="ChEBI" id="CHEBI:64428"/>
        <dbReference type="ChEBI" id="CHEBI:149473"/>
        <dbReference type="EC" id="2.8.1.6"/>
    </reaction>
</comment>
<comment type="cofactor">
    <cofactor evidence="1">
        <name>[4Fe-4S] cluster</name>
        <dbReference type="ChEBI" id="CHEBI:49883"/>
    </cofactor>
    <text evidence="1">Binds 1 [4Fe-4S] cluster. The cluster is coordinated with 3 cysteines and an exchangeable S-adenosyl-L-methionine.</text>
</comment>
<comment type="cofactor">
    <cofactor evidence="1">
        <name>[2Fe-2S] cluster</name>
        <dbReference type="ChEBI" id="CHEBI:190135"/>
    </cofactor>
    <text evidence="1">Binds 1 [2Fe-2S] cluster. The cluster is coordinated with 3 cysteines and 1 arginine.</text>
</comment>
<comment type="pathway">
    <text evidence="1">Cofactor biosynthesis; biotin biosynthesis; biotin from 7,8-diaminononanoate: step 2/2.</text>
</comment>
<comment type="subunit">
    <text evidence="1">Homodimer.</text>
</comment>
<comment type="similarity">
    <text evidence="1">Belongs to the radical SAM superfamily. Biotin synthase family.</text>
</comment>
<sequence length="327" mass="35740">MHSATMVFKRAATPHPEKAEWSVDDVEALLGLPFMELVFRAAEIHRQFFDPTKVQLSTLVSIKTGGCPEDCGYCPQSVHHDTPVADQPMMTVDEVVAAARQAKANGAGRFCMGAAWRGPKDADLQKTLDMVREVKALGLETCATFGLLRDGQAEQLKDAGLDYYNHNLDTAPDKYGDIIQTREYEDRLDTLGKVRKAGLSVCCGGIVGMNETRRDRAGLIVQLANLDPQPESVPVNNLVQVVGTPLEGAERLDWTEFVRTIAVARITMPASYVRLSAGRREMDEATQALCFLAGANSIFYGDKLLTTGNPDVVADQSLMAKLNLQPL</sequence>
<gene>
    <name evidence="1" type="primary">bioB</name>
    <name type="ordered locus">CV_4381</name>
</gene>
<accession>Q7NPW1</accession>
<feature type="chain" id="PRO_0000381306" description="Biotin synthase">
    <location>
        <begin position="1"/>
        <end position="327"/>
    </location>
</feature>
<feature type="domain" description="Radical SAM core" evidence="2">
    <location>
        <begin position="52"/>
        <end position="279"/>
    </location>
</feature>
<feature type="binding site" evidence="1">
    <location>
        <position position="67"/>
    </location>
    <ligand>
        <name>[4Fe-4S] cluster</name>
        <dbReference type="ChEBI" id="CHEBI:49883"/>
        <note>4Fe-4S-S-AdoMet</note>
    </ligand>
</feature>
<feature type="binding site" evidence="1">
    <location>
        <position position="71"/>
    </location>
    <ligand>
        <name>[4Fe-4S] cluster</name>
        <dbReference type="ChEBI" id="CHEBI:49883"/>
        <note>4Fe-4S-S-AdoMet</note>
    </ligand>
</feature>
<feature type="binding site" evidence="1">
    <location>
        <position position="74"/>
    </location>
    <ligand>
        <name>[4Fe-4S] cluster</name>
        <dbReference type="ChEBI" id="CHEBI:49883"/>
        <note>4Fe-4S-S-AdoMet</note>
    </ligand>
</feature>
<feature type="binding site" evidence="1">
    <location>
        <position position="111"/>
    </location>
    <ligand>
        <name>[2Fe-2S] cluster</name>
        <dbReference type="ChEBI" id="CHEBI:190135"/>
    </ligand>
</feature>
<feature type="binding site" evidence="1">
    <location>
        <position position="142"/>
    </location>
    <ligand>
        <name>[2Fe-2S] cluster</name>
        <dbReference type="ChEBI" id="CHEBI:190135"/>
    </ligand>
</feature>
<feature type="binding site" evidence="1">
    <location>
        <position position="202"/>
    </location>
    <ligand>
        <name>[2Fe-2S] cluster</name>
        <dbReference type="ChEBI" id="CHEBI:190135"/>
    </ligand>
</feature>
<feature type="binding site" evidence="1">
    <location>
        <position position="274"/>
    </location>
    <ligand>
        <name>[2Fe-2S] cluster</name>
        <dbReference type="ChEBI" id="CHEBI:190135"/>
    </ligand>
</feature>
<name>BIOB_CHRVO</name>
<organism>
    <name type="scientific">Chromobacterium violaceum (strain ATCC 12472 / DSM 30191 / JCM 1249 / CCUG 213 / NBRC 12614 / NCIMB 9131 / NCTC 9757 / MK)</name>
    <dbReference type="NCBI Taxonomy" id="243365"/>
    <lineage>
        <taxon>Bacteria</taxon>
        <taxon>Pseudomonadati</taxon>
        <taxon>Pseudomonadota</taxon>
        <taxon>Betaproteobacteria</taxon>
        <taxon>Neisseriales</taxon>
        <taxon>Chromobacteriaceae</taxon>
        <taxon>Chromobacterium</taxon>
    </lineage>
</organism>
<evidence type="ECO:0000255" key="1">
    <source>
        <dbReference type="HAMAP-Rule" id="MF_01694"/>
    </source>
</evidence>
<evidence type="ECO:0000255" key="2">
    <source>
        <dbReference type="PROSITE-ProRule" id="PRU01266"/>
    </source>
</evidence>
<reference key="1">
    <citation type="journal article" date="2003" name="Proc. Natl. Acad. Sci. U.S.A.">
        <title>The complete genome sequence of Chromobacterium violaceum reveals remarkable and exploitable bacterial adaptability.</title>
        <authorList>
            <person name="Vasconcelos A.T.R."/>
            <person name="de Almeida D.F."/>
            <person name="Hungria M."/>
            <person name="Guimaraes C.T."/>
            <person name="Antonio R.V."/>
            <person name="Almeida F.C."/>
            <person name="de Almeida L.G.P."/>
            <person name="de Almeida R."/>
            <person name="Alves-Gomes J.A."/>
            <person name="Andrade E.M."/>
            <person name="Araripe J."/>
            <person name="de Araujo M.F.F."/>
            <person name="Astolfi-Filho S."/>
            <person name="Azevedo V."/>
            <person name="Baptista A.J."/>
            <person name="Bataus L.A.M."/>
            <person name="Batista J.S."/>
            <person name="Belo A."/>
            <person name="van den Berg C."/>
            <person name="Bogo M."/>
            <person name="Bonatto S."/>
            <person name="Bordignon J."/>
            <person name="Brigido M.M."/>
            <person name="Brito C.A."/>
            <person name="Brocchi M."/>
            <person name="Burity H.A."/>
            <person name="Camargo A.A."/>
            <person name="Cardoso D.D.P."/>
            <person name="Carneiro N.P."/>
            <person name="Carraro D.M."/>
            <person name="Carvalho C.M.B."/>
            <person name="Cascardo J.C.M."/>
            <person name="Cavada B.S."/>
            <person name="Chueire L.M.O."/>
            <person name="Creczynski-Pasa T.B."/>
            <person name="Cunha-Junior N.C."/>
            <person name="Fagundes N."/>
            <person name="Falcao C.L."/>
            <person name="Fantinatti F."/>
            <person name="Farias I.P."/>
            <person name="Felipe M.S.S."/>
            <person name="Ferrari L.P."/>
            <person name="Ferro J.A."/>
            <person name="Ferro M.I.T."/>
            <person name="Franco G.R."/>
            <person name="Freitas N.S.A."/>
            <person name="Furlan L.R."/>
            <person name="Gazzinelli R.T."/>
            <person name="Gomes E.A."/>
            <person name="Goncalves P.R."/>
            <person name="Grangeiro T.B."/>
            <person name="Grattapaglia D."/>
            <person name="Grisard E.C."/>
            <person name="Hanna E.S."/>
            <person name="Jardim S.N."/>
            <person name="Laurino J."/>
            <person name="Leoi L.C.T."/>
            <person name="Lima L.F.A."/>
            <person name="Loureiro M.F."/>
            <person name="Lyra M.C.C.P."/>
            <person name="Madeira H.M.F."/>
            <person name="Manfio G.P."/>
            <person name="Maranhao A.Q."/>
            <person name="Martins W.S."/>
            <person name="di Mauro S.M.Z."/>
            <person name="de Medeiros S.R.B."/>
            <person name="Meissner R.V."/>
            <person name="Moreira M.A.M."/>
            <person name="Nascimento F.F."/>
            <person name="Nicolas M.F."/>
            <person name="Oliveira J.G."/>
            <person name="Oliveira S.C."/>
            <person name="Paixao R.F.C."/>
            <person name="Parente J.A."/>
            <person name="Pedrosa F.O."/>
            <person name="Pena S.D.J."/>
            <person name="Pereira J.O."/>
            <person name="Pereira M."/>
            <person name="Pinto L.S.R.C."/>
            <person name="Pinto L.S."/>
            <person name="Porto J.I.R."/>
            <person name="Potrich D.P."/>
            <person name="Ramalho-Neto C.E."/>
            <person name="Reis A.M.M."/>
            <person name="Rigo L.U."/>
            <person name="Rondinelli E."/>
            <person name="Santos E.B.P."/>
            <person name="Santos F.R."/>
            <person name="Schneider M.P.C."/>
            <person name="Seuanez H.N."/>
            <person name="Silva A.M.R."/>
            <person name="da Silva A.L.C."/>
            <person name="Silva D.W."/>
            <person name="Silva R."/>
            <person name="Simoes I.C."/>
            <person name="Simon D."/>
            <person name="Soares C.M.A."/>
            <person name="Soares R.B.A."/>
            <person name="Souza E.M."/>
            <person name="Souza K.R.L."/>
            <person name="Souza R.C."/>
            <person name="Steffens M.B.R."/>
            <person name="Steindel M."/>
            <person name="Teixeira S.R."/>
            <person name="Urmenyi T."/>
            <person name="Vettore A."/>
            <person name="Wassem R."/>
            <person name="Zaha A."/>
            <person name="Simpson A.J.G."/>
        </authorList>
    </citation>
    <scope>NUCLEOTIDE SEQUENCE [LARGE SCALE GENOMIC DNA]</scope>
    <source>
        <strain>ATCC 12472 / DSM 30191 / JCM 1249 / CCUG 213 / NBRC 12614 / NCIMB 9131 / NCTC 9757 / MK</strain>
    </source>
</reference>
<proteinExistence type="inferred from homology"/>